<reference key="1">
    <citation type="journal article" date="1995" name="Science">
        <title>Whole-genome random sequencing and assembly of Haemophilus influenzae Rd.</title>
        <authorList>
            <person name="Fleischmann R.D."/>
            <person name="Adams M.D."/>
            <person name="White O."/>
            <person name="Clayton R.A."/>
            <person name="Kirkness E.F."/>
            <person name="Kerlavage A.R."/>
            <person name="Bult C.J."/>
            <person name="Tomb J.-F."/>
            <person name="Dougherty B.A."/>
            <person name="Merrick J.M."/>
            <person name="McKenney K."/>
            <person name="Sutton G.G."/>
            <person name="FitzHugh W."/>
            <person name="Fields C.A."/>
            <person name="Gocayne J.D."/>
            <person name="Scott J.D."/>
            <person name="Shirley R."/>
            <person name="Liu L.-I."/>
            <person name="Glodek A."/>
            <person name="Kelley J.M."/>
            <person name="Weidman J.F."/>
            <person name="Phillips C.A."/>
            <person name="Spriggs T."/>
            <person name="Hedblom E."/>
            <person name="Cotton M.D."/>
            <person name="Utterback T.R."/>
            <person name="Hanna M.C."/>
            <person name="Nguyen D.T."/>
            <person name="Saudek D.M."/>
            <person name="Brandon R.C."/>
            <person name="Fine L.D."/>
            <person name="Fritchman J.L."/>
            <person name="Fuhrmann J.L."/>
            <person name="Geoghagen N.S.M."/>
            <person name="Gnehm C.L."/>
            <person name="McDonald L.A."/>
            <person name="Small K.V."/>
            <person name="Fraser C.M."/>
            <person name="Smith H.O."/>
            <person name="Venter J.C."/>
        </authorList>
    </citation>
    <scope>NUCLEOTIDE SEQUENCE [LARGE SCALE GENOMIC DNA]</scope>
    <source>
        <strain>ATCC 51907 / DSM 11121 / KW20 / Rd</strain>
    </source>
</reference>
<reference key="2">
    <citation type="journal article" date="2000" name="Electrophoresis">
        <title>Two-dimensional map of the proteome of Haemophilus influenzae.</title>
        <authorList>
            <person name="Langen H."/>
            <person name="Takacs B."/>
            <person name="Evers S."/>
            <person name="Berndt P."/>
            <person name="Lahm H.W."/>
            <person name="Wipf B."/>
            <person name="Gray C."/>
            <person name="Fountoulakis M."/>
        </authorList>
    </citation>
    <scope>IDENTIFICATION BY MASS SPECTROMETRY</scope>
    <source>
        <strain>ATCC 51907 / DSM 11121 / KW20 / Rd</strain>
    </source>
</reference>
<comment type="function">
    <text evidence="1">Involved in a phospholipid transport pathway that maintains lipid asymmetry in the outer membrane by retrograde trafficking of phospholipids from the outer membrane to the inner membrane. May transfer phospholipid across the periplasmic space and deliver it to the MlaFEDB complex at the inner membrane.</text>
</comment>
<comment type="subcellular location">
    <subcellularLocation>
        <location evidence="1">Periplasm</location>
    </subcellularLocation>
</comment>
<comment type="similarity">
    <text evidence="3">Belongs to the MlaC/ttg2D family.</text>
</comment>
<evidence type="ECO:0000250" key="1">
    <source>
        <dbReference type="UniProtKB" id="P0ADV7"/>
    </source>
</evidence>
<evidence type="ECO:0000255" key="2"/>
<evidence type="ECO:0000305" key="3"/>
<organism>
    <name type="scientific">Haemophilus influenzae (strain ATCC 51907 / DSM 11121 / KW20 / Rd)</name>
    <dbReference type="NCBI Taxonomy" id="71421"/>
    <lineage>
        <taxon>Bacteria</taxon>
        <taxon>Pseudomonadati</taxon>
        <taxon>Pseudomonadota</taxon>
        <taxon>Gammaproteobacteria</taxon>
        <taxon>Pasteurellales</taxon>
        <taxon>Pasteurellaceae</taxon>
        <taxon>Haemophilus</taxon>
    </lineage>
</organism>
<gene>
    <name evidence="1" type="primary">mlaC</name>
    <name type="ordered locus">HI_1084</name>
</gene>
<dbReference type="EMBL" id="L42023">
    <property type="protein sequence ID" value="AAC22740.1"/>
    <property type="molecule type" value="Genomic_DNA"/>
</dbReference>
<dbReference type="PIR" id="B64166">
    <property type="entry name" value="B64166"/>
</dbReference>
<dbReference type="RefSeq" id="NP_439241.1">
    <property type="nucleotide sequence ID" value="NC_000907.1"/>
</dbReference>
<dbReference type="SMR" id="P45028"/>
<dbReference type="STRING" id="71421.HI_1084"/>
<dbReference type="EnsemblBacteria" id="AAC22740">
    <property type="protein sequence ID" value="AAC22740"/>
    <property type="gene ID" value="HI_1084"/>
</dbReference>
<dbReference type="KEGG" id="hin:HI_1084"/>
<dbReference type="PATRIC" id="fig|71421.8.peg.1129"/>
<dbReference type="eggNOG" id="COG2854">
    <property type="taxonomic scope" value="Bacteria"/>
</dbReference>
<dbReference type="HOGENOM" id="CLU_094502_3_0_6"/>
<dbReference type="OrthoDB" id="9787053at2"/>
<dbReference type="PhylomeDB" id="P45028"/>
<dbReference type="BioCyc" id="HINF71421:G1GJ1-1119-MONOMER"/>
<dbReference type="Proteomes" id="UP000000579">
    <property type="component" value="Chromosome"/>
</dbReference>
<dbReference type="GO" id="GO:0042597">
    <property type="term" value="C:periplasmic space"/>
    <property type="evidence" value="ECO:0007669"/>
    <property type="project" value="UniProtKB-SubCell"/>
</dbReference>
<dbReference type="Gene3D" id="3.10.450.710">
    <property type="entry name" value="Tgt2/MlaC"/>
    <property type="match status" value="1"/>
</dbReference>
<dbReference type="InterPro" id="IPR008869">
    <property type="entry name" value="MlaC/ttg2D"/>
</dbReference>
<dbReference type="InterPro" id="IPR042245">
    <property type="entry name" value="Tgt2/MlaC_sf"/>
</dbReference>
<dbReference type="NCBIfam" id="NF011697">
    <property type="entry name" value="PRK15117.1"/>
    <property type="match status" value="1"/>
</dbReference>
<dbReference type="PANTHER" id="PTHR36573">
    <property type="entry name" value="INTERMEMBRANE PHOSPHOLIPID TRANSPORT SYSTEM BINDING PROTEIN MLAC"/>
    <property type="match status" value="1"/>
</dbReference>
<dbReference type="PANTHER" id="PTHR36573:SF1">
    <property type="entry name" value="INTERMEMBRANE PHOSPHOLIPID TRANSPORT SYSTEM BINDING PROTEIN MLAC"/>
    <property type="match status" value="1"/>
</dbReference>
<dbReference type="Pfam" id="PF05494">
    <property type="entry name" value="MlaC"/>
    <property type="match status" value="1"/>
</dbReference>
<dbReference type="PIRSF" id="PIRSF004649">
    <property type="entry name" value="MlaC"/>
    <property type="match status" value="1"/>
</dbReference>
<name>MLAC_HAEIN</name>
<keyword id="KW-0574">Periplasm</keyword>
<keyword id="KW-1185">Reference proteome</keyword>
<keyword id="KW-0732">Signal</keyword>
<accession>P45028</accession>
<protein>
    <recommendedName>
        <fullName evidence="1">Intermembrane phospholipid transport system binding protein MlaC</fullName>
    </recommendedName>
</protein>
<feature type="signal peptide" evidence="2">
    <location>
        <begin position="1"/>
        <end position="28"/>
    </location>
</feature>
<feature type="chain" id="PRO_0000013917" description="Intermembrane phospholipid transport system binding protein MlaC">
    <location>
        <begin position="29"/>
        <end position="214"/>
    </location>
</feature>
<sequence length="214" mass="24510">MNLIQLKKWFTILTFVLTAFLVTRTAIAETSPYVLMQQAADKLFSDIQANQSKIKQDPNYLRTIVRNDLLPYVNLEYAGSKVLGSYYKSTSAEQREKFFKTFGELIEQKYAQALTNYSNQKIQIESEKELGDNNFINIRVNIIQANGVAPILLYFKWRKGNKSGEWKVYDMVGAGVSMLEDTIKNWVGILNKQGIDTLITKMQQSASQPIIFNQ</sequence>
<proteinExistence type="evidence at protein level"/>